<organism>
    <name type="scientific">Solanum lycopersicum</name>
    <name type="common">Tomato</name>
    <name type="synonym">Lycopersicon esculentum</name>
    <dbReference type="NCBI Taxonomy" id="4081"/>
    <lineage>
        <taxon>Eukaryota</taxon>
        <taxon>Viridiplantae</taxon>
        <taxon>Streptophyta</taxon>
        <taxon>Embryophyta</taxon>
        <taxon>Tracheophyta</taxon>
        <taxon>Spermatophyta</taxon>
        <taxon>Magnoliopsida</taxon>
        <taxon>eudicotyledons</taxon>
        <taxon>Gunneridae</taxon>
        <taxon>Pentapetalae</taxon>
        <taxon>asterids</taxon>
        <taxon>lamiids</taxon>
        <taxon>Solanales</taxon>
        <taxon>Solanaceae</taxon>
        <taxon>Solanoideae</taxon>
        <taxon>Solaneae</taxon>
        <taxon>Solanum</taxon>
        <taxon>Solanum subgen. Lycopersicon</taxon>
    </lineage>
</organism>
<proteinExistence type="evidence at protein level"/>
<keyword id="KW-1015">Disulfide bond</keyword>
<keyword id="KW-0326">Glycosidase</keyword>
<keyword id="KW-0378">Hydrolase</keyword>
<keyword id="KW-0568">Pathogenesis-related protein</keyword>
<keyword id="KW-0611">Plant defense</keyword>
<keyword id="KW-1185">Reference proteome</keyword>
<keyword id="KW-0964">Secreted</keyword>
<keyword id="KW-0732">Signal</keyword>
<keyword id="KW-0926">Vacuole</keyword>
<comment type="function">
    <text evidence="1 2">Antifungal protein (By similarity). May bind to beta-glucans and have beta-1,3-D-glucanase activity (By similarity).</text>
</comment>
<comment type="catalytic activity">
    <reaction evidence="1">
        <text>Endohydrolysis of (1-&gt;3)- or (1-&gt;4)-linkages in beta-D-glucans when the glucose residue whose reducing group is involved in the linkage to be hydrolyzed is itself substituted at C-3.</text>
        <dbReference type="EC" id="3.2.1.6"/>
    </reaction>
</comment>
<comment type="subcellular location">
    <subcellularLocation>
        <location evidence="5">Secreted</location>
    </subcellularLocation>
    <subcellularLocation>
        <location evidence="2">Vacuole</location>
    </subcellularLocation>
    <text evidence="5">Secreted into the xylem sap after infection with Fusarium oxysporum f. sp. lycopersici.</text>
</comment>
<comment type="induction">
    <text evidence="5">Accumulates in the xylem sap in the presence of Fusarium oxysporum f. sp. lycopersici.</text>
</comment>
<comment type="similarity">
    <text evidence="4">Belongs to the thaumatin family.</text>
</comment>
<comment type="sequence caution" evidence="7">
    <conflict type="erroneous initiation">
        <sequence resource="EMBL-CDS" id="AAM23272"/>
    </conflict>
    <text>Truncated N-terminus.</text>
</comment>
<reference key="1">
    <citation type="journal article" date="2002" name="Plant Physiol.">
        <title>Mass spectrometric identification of isoforms of PR proteins in xylem sap of fungus-infected tomato.</title>
        <authorList>
            <person name="Rep M."/>
            <person name="Dekker H.L."/>
            <person name="Vossen J.H."/>
            <person name="de Boer A.D."/>
            <person name="Houterman P.M."/>
            <person name="Speijer D."/>
            <person name="Back J.W."/>
            <person name="de Koster C.G."/>
            <person name="Cornelissen B.J."/>
        </authorList>
    </citation>
    <scope>NUCLEOTIDE SEQUENCE [MRNA]</scope>
    <scope>INDUCTION BY FUSARIUM OXYSPORUM</scope>
    <scope>SUBCELLULAR LOCATION</scope>
    <scope>IDENTIFICATION BY MASS SPECTROMETRY</scope>
    <source>
        <strain>cv. C32</strain>
        <strain>cv. GCR161</strain>
        <tissue>Hypocotyl</tissue>
        <tissue>Root</tissue>
    </source>
</reference>
<reference key="2">
    <citation type="journal article" date="2012" name="Nature">
        <title>The tomato genome sequence provides insights into fleshy fruit evolution.</title>
        <authorList>
            <consortium name="Tomato Genome Consortium"/>
        </authorList>
    </citation>
    <scope>NUCLEOTIDE SEQUENCE [LARGE SCALE GENOMIC DNA]</scope>
    <source>
        <strain>cv. Heinz 1706</strain>
    </source>
</reference>
<sequence length="230" mass="25099">MYTNMGYLTSSFIFFFLALVTYTYAATIEVRNNCPYTVWAASTPIGGGRRLDRGQTWVINAPRGTKMARIWGRTNCNFNGAGRGSCQTGDCGGVLHCTGWGKPPNTLAEYALDQFSNLDFWDISLVDGFNIPMTFAPTNPSGGKCHAIHCTANINGECPSPLRVPGGCNNPCTTFGGQQYCCTQGPCGPTKFSRFFKQRCPNAYSYPQDDPTSLFTCPSGSTNYRVVFCP</sequence>
<dbReference type="EC" id="3.2.1.6" evidence="1"/>
<dbReference type="EMBL" id="AY093595">
    <property type="protein sequence ID" value="AAM23272.1"/>
    <property type="status" value="ALT_INIT"/>
    <property type="molecule type" value="mRNA"/>
</dbReference>
<dbReference type="SMR" id="Q8LPU1"/>
<dbReference type="STRING" id="4081.Q8LPU1"/>
<dbReference type="Allergome" id="9063">
    <property type="allergen name" value="Sola l TLP"/>
</dbReference>
<dbReference type="PaxDb" id="4081-Solyc08g080620.1.1"/>
<dbReference type="KEGG" id="sly:543837"/>
<dbReference type="eggNOG" id="ENOG502QV4N">
    <property type="taxonomic scope" value="Eukaryota"/>
</dbReference>
<dbReference type="HOGENOM" id="CLU_043181_5_0_1"/>
<dbReference type="InParanoid" id="A0A3Q7HTH3"/>
<dbReference type="OrthoDB" id="430315at2759"/>
<dbReference type="PhylomeDB" id="Q8LPU1"/>
<dbReference type="Proteomes" id="UP000004994">
    <property type="component" value="Chromosome 8"/>
</dbReference>
<dbReference type="ExpressionAtlas" id="Q8LPU1">
    <property type="expression patterns" value="baseline and differential"/>
</dbReference>
<dbReference type="GO" id="GO:0048046">
    <property type="term" value="C:apoplast"/>
    <property type="evidence" value="ECO:0000314"/>
    <property type="project" value="UniProtKB"/>
</dbReference>
<dbReference type="GO" id="GO:0005773">
    <property type="term" value="C:vacuole"/>
    <property type="evidence" value="ECO:0007669"/>
    <property type="project" value="UniProtKB-SubCell"/>
</dbReference>
<dbReference type="GO" id="GO:0052736">
    <property type="term" value="F:beta-glucanase activity"/>
    <property type="evidence" value="ECO:0000250"/>
    <property type="project" value="UniProtKB"/>
</dbReference>
<dbReference type="GO" id="GO:0006952">
    <property type="term" value="P:defense response"/>
    <property type="evidence" value="ECO:0007669"/>
    <property type="project" value="UniProtKB-KW"/>
</dbReference>
<dbReference type="GO" id="GO:0009620">
    <property type="term" value="P:response to fungus"/>
    <property type="evidence" value="ECO:0000270"/>
    <property type="project" value="UniProtKB"/>
</dbReference>
<dbReference type="CDD" id="cd09217">
    <property type="entry name" value="TLP-P"/>
    <property type="match status" value="1"/>
</dbReference>
<dbReference type="FunFam" id="2.60.110.10:FF:000003">
    <property type="entry name" value="Thaumatin I"/>
    <property type="match status" value="1"/>
</dbReference>
<dbReference type="Gene3D" id="2.60.110.10">
    <property type="entry name" value="Thaumatin"/>
    <property type="match status" value="1"/>
</dbReference>
<dbReference type="InterPro" id="IPR037176">
    <property type="entry name" value="Osmotin/thaumatin-like_sf"/>
</dbReference>
<dbReference type="InterPro" id="IPR001938">
    <property type="entry name" value="Thaumatin"/>
</dbReference>
<dbReference type="InterPro" id="IPR017949">
    <property type="entry name" value="Thaumatin_CS"/>
</dbReference>
<dbReference type="PANTHER" id="PTHR31048">
    <property type="entry name" value="OS03G0233200 PROTEIN"/>
    <property type="match status" value="1"/>
</dbReference>
<dbReference type="Pfam" id="PF00314">
    <property type="entry name" value="Thaumatin"/>
    <property type="match status" value="1"/>
</dbReference>
<dbReference type="PIRSF" id="PIRSF002703">
    <property type="entry name" value="Thaumatin"/>
    <property type="match status" value="1"/>
</dbReference>
<dbReference type="PRINTS" id="PR00347">
    <property type="entry name" value="THAUMATIN"/>
</dbReference>
<dbReference type="SMART" id="SM00205">
    <property type="entry name" value="THN"/>
    <property type="match status" value="1"/>
</dbReference>
<dbReference type="SUPFAM" id="SSF49870">
    <property type="entry name" value="Osmotin, thaumatin-like protein"/>
    <property type="match status" value="1"/>
</dbReference>
<dbReference type="PROSITE" id="PS00316">
    <property type="entry name" value="THAUMATIN_1"/>
    <property type="match status" value="1"/>
</dbReference>
<dbReference type="PROSITE" id="PS51367">
    <property type="entry name" value="THAUMATIN_2"/>
    <property type="match status" value="1"/>
</dbReference>
<feature type="signal peptide" evidence="3">
    <location>
        <begin position="1"/>
        <end position="25"/>
    </location>
</feature>
<feature type="chain" id="PRO_5014589033" description="Osmotin-like protein PR-5x">
    <location>
        <begin position="26"/>
        <end position="230"/>
    </location>
</feature>
<feature type="disulfide bond" evidence="4">
    <location>
        <begin position="34"/>
        <end position="229"/>
    </location>
</feature>
<feature type="disulfide bond" evidence="4">
    <location>
        <begin position="76"/>
        <end position="86"/>
    </location>
</feature>
<feature type="disulfide bond" evidence="4">
    <location>
        <begin position="91"/>
        <end position="97"/>
    </location>
</feature>
<feature type="disulfide bond" evidence="4">
    <location>
        <begin position="145"/>
        <end position="217"/>
    </location>
</feature>
<feature type="disulfide bond" evidence="4">
    <location>
        <begin position="150"/>
        <end position="200"/>
    </location>
</feature>
<feature type="disulfide bond" evidence="4">
    <location>
        <begin position="158"/>
        <end position="168"/>
    </location>
</feature>
<feature type="disulfide bond" evidence="4">
    <location>
        <begin position="172"/>
        <end position="181"/>
    </location>
</feature>
<feature type="disulfide bond" evidence="4">
    <location>
        <begin position="182"/>
        <end position="187"/>
    </location>
</feature>
<protein>
    <recommendedName>
        <fullName evidence="6">Osmotin-like protein PR-5x</fullName>
    </recommendedName>
    <alternativeName>
        <fullName evidence="6">22 kDa pathogenesis-related protein</fullName>
    </alternativeName>
    <alternativeName>
        <fullName evidence="6">Pathogenesis-related protein PR-5 of xylem sap</fullName>
    </alternativeName>
    <alternativeName>
        <fullName evidence="1">Probable endo-beta-1,3-D-glucanase PR-5x</fullName>
        <ecNumber evidence="1">3.2.1.6</ecNumber>
    </alternativeName>
</protein>
<evidence type="ECO:0000250" key="1">
    <source>
        <dbReference type="UniProtKB" id="P12670"/>
    </source>
</evidence>
<evidence type="ECO:0000250" key="2">
    <source>
        <dbReference type="UniProtKB" id="Q01591"/>
    </source>
</evidence>
<evidence type="ECO:0000255" key="3"/>
<evidence type="ECO:0000255" key="4">
    <source>
        <dbReference type="PROSITE-ProRule" id="PRU00699"/>
    </source>
</evidence>
<evidence type="ECO:0000269" key="5">
    <source>
    </source>
</evidence>
<evidence type="ECO:0000303" key="6">
    <source>
    </source>
</evidence>
<evidence type="ECO:0000305" key="7"/>
<accession>Q8LPU1</accession>
<accession>A0A3Q7HTH3</accession>
<gene>
    <name evidence="6" type="primary">PR-5x</name>
    <name evidence="7" type="ordered locus">Solyc08g080620</name>
</gene>
<name>PR5X_SOLLC</name>